<proteinExistence type="inferred from homology"/>
<keyword id="KW-1185">Reference proteome</keyword>
<gene>
    <name evidence="3" type="primary">SPDYE17</name>
</gene>
<feature type="chain" id="PRO_0000451619" description="Speedy protein E17">
    <location>
        <begin position="1"/>
        <end position="265"/>
    </location>
</feature>
<feature type="region of interest" description="Disordered" evidence="1">
    <location>
        <begin position="1"/>
        <end position="80"/>
    </location>
</feature>
<feature type="compositionally biased region" description="Acidic residues" evidence="1">
    <location>
        <begin position="66"/>
        <end position="80"/>
    </location>
</feature>
<name>SPD17_HUMAN</name>
<sequence>MGQILGKIMMSHQPQPQEERSPQRSTSGYPLQEVVDDEVSGPSAPGVDPSPPRRSLGWKRKRECLDESDDEPEKELAPEPEETWVAETLCGLKMKAKRRRVSLVLPEYYEAFNRLLEDPVIKRLLAWDKDLRVSDKYLLAMVIAYFSRAGLPSWQYQRIHFFLALYLANDMEEDDEAPKQNIFYFLYEETRSHIPLLSELWFQLCRYMNPRARKNCSQIALFRKYRFHFFCSMRCRAWVSLEELEEIQAYDPEHWVWARDRAHLS</sequence>
<comment type="similarity">
    <text evidence="2">Belongs to the Speedy/Ringo family.</text>
</comment>
<dbReference type="EMBL" id="AC007000">
    <property type="status" value="NOT_ANNOTATED_CDS"/>
    <property type="molecule type" value="Genomic_DNA"/>
</dbReference>
<dbReference type="CCDS" id="CCDS94130.1"/>
<dbReference type="RefSeq" id="NP_001338280.1">
    <property type="nucleotide sequence ID" value="NM_001351351.3"/>
</dbReference>
<dbReference type="RefSeq" id="XP_006716273.1">
    <property type="nucleotide sequence ID" value="XM_006716210.3"/>
</dbReference>
<dbReference type="RefSeq" id="XP_006716275.1">
    <property type="nucleotide sequence ID" value="XM_006716212.3"/>
</dbReference>
<dbReference type="RefSeq" id="XP_006726497.1">
    <property type="nucleotide sequence ID" value="XM_006726434.3"/>
</dbReference>
<dbReference type="RefSeq" id="XP_016868377.1">
    <property type="nucleotide sequence ID" value="XM_017012888.1"/>
</dbReference>
<dbReference type="RefSeq" id="XP_016868422.1">
    <property type="nucleotide sequence ID" value="XM_017012933.1"/>
</dbReference>
<dbReference type="RefSeq" id="XP_016885939.1">
    <property type="nucleotide sequence ID" value="XM_017030450.1"/>
</dbReference>
<dbReference type="RefSeq" id="XP_047275675.1">
    <property type="nucleotide sequence ID" value="XM_047419719.1"/>
</dbReference>
<dbReference type="SMR" id="P0DUD2"/>
<dbReference type="FunCoup" id="P0DUD2">
    <property type="interactions" value="158"/>
</dbReference>
<dbReference type="MassIVE" id="P0DUD2"/>
<dbReference type="Ensembl" id="ENST00000671986.3">
    <property type="protein sequence ID" value="ENSP00000501236.1"/>
    <property type="gene ID" value="ENSG00000186645.11"/>
</dbReference>
<dbReference type="GeneID" id="102723849"/>
<dbReference type="MANE-Select" id="ENST00000671986.3">
    <property type="protein sequence ID" value="ENSP00000501236.1"/>
    <property type="RefSeq nucleotide sequence ID" value="NM_001351351.3"/>
    <property type="RefSeq protein sequence ID" value="NP_001338280.1"/>
</dbReference>
<dbReference type="AGR" id="HGNC:51513"/>
<dbReference type="GeneCards" id="SPDYE17"/>
<dbReference type="HGNC" id="HGNC:51513">
    <property type="gene designation" value="SPDYE17"/>
</dbReference>
<dbReference type="HPA" id="ENSG00000186645">
    <property type="expression patterns" value="Not detected"/>
</dbReference>
<dbReference type="neXtProt" id="NX_P0DUD2"/>
<dbReference type="InParanoid" id="P0DUD2"/>
<dbReference type="OrthoDB" id="9442170at2759"/>
<dbReference type="Proteomes" id="UP000005640">
    <property type="component" value="Chromosome 7"/>
</dbReference>
<dbReference type="Bgee" id="ENSG00000186645">
    <property type="expression patterns" value="Expressed in male germ line stem cell (sensu Vertebrata) in testis and 96 other cell types or tissues"/>
</dbReference>
<dbReference type="ExpressionAtlas" id="P0DUD2">
    <property type="expression patterns" value="baseline"/>
</dbReference>
<dbReference type="GO" id="GO:0019901">
    <property type="term" value="F:protein kinase binding"/>
    <property type="evidence" value="ECO:0000318"/>
    <property type="project" value="GO_Central"/>
</dbReference>
<dbReference type="InterPro" id="IPR020984">
    <property type="entry name" value="Speedy"/>
</dbReference>
<dbReference type="PANTHER" id="PTHR31156">
    <property type="entry name" value="WBSCR19-LIKE PROTEIN"/>
    <property type="match status" value="1"/>
</dbReference>
<dbReference type="Pfam" id="PF11357">
    <property type="entry name" value="Spy1"/>
    <property type="match status" value="1"/>
</dbReference>
<accession>P0DUD2</accession>
<protein>
    <recommendedName>
        <fullName evidence="2">Speedy protein E17</fullName>
    </recommendedName>
</protein>
<organism>
    <name type="scientific">Homo sapiens</name>
    <name type="common">Human</name>
    <dbReference type="NCBI Taxonomy" id="9606"/>
    <lineage>
        <taxon>Eukaryota</taxon>
        <taxon>Metazoa</taxon>
        <taxon>Chordata</taxon>
        <taxon>Craniata</taxon>
        <taxon>Vertebrata</taxon>
        <taxon>Euteleostomi</taxon>
        <taxon>Mammalia</taxon>
        <taxon>Eutheria</taxon>
        <taxon>Euarchontoglires</taxon>
        <taxon>Primates</taxon>
        <taxon>Haplorrhini</taxon>
        <taxon>Catarrhini</taxon>
        <taxon>Hominidae</taxon>
        <taxon>Homo</taxon>
    </lineage>
</organism>
<evidence type="ECO:0000256" key="1">
    <source>
        <dbReference type="SAM" id="MobiDB-lite"/>
    </source>
</evidence>
<evidence type="ECO:0000305" key="2"/>
<evidence type="ECO:0000312" key="3">
    <source>
        <dbReference type="HGNC" id="HGNC:51513"/>
    </source>
</evidence>
<reference key="1">
    <citation type="journal article" date="2003" name="Nature">
        <title>The DNA sequence of human chromosome 7.</title>
        <authorList>
            <person name="Hillier L.W."/>
            <person name="Fulton R.S."/>
            <person name="Fulton L.A."/>
            <person name="Graves T.A."/>
            <person name="Pepin K.H."/>
            <person name="Wagner-McPherson C."/>
            <person name="Layman D."/>
            <person name="Maas J."/>
            <person name="Jaeger S."/>
            <person name="Walker R."/>
            <person name="Wylie K."/>
            <person name="Sekhon M."/>
            <person name="Becker M.C."/>
            <person name="O'Laughlin M.D."/>
            <person name="Schaller M.E."/>
            <person name="Fewell G.A."/>
            <person name="Delehaunty K.D."/>
            <person name="Miner T.L."/>
            <person name="Nash W.E."/>
            <person name="Cordes M."/>
            <person name="Du H."/>
            <person name="Sun H."/>
            <person name="Edwards J."/>
            <person name="Bradshaw-Cordum H."/>
            <person name="Ali J."/>
            <person name="Andrews S."/>
            <person name="Isak A."/>
            <person name="Vanbrunt A."/>
            <person name="Nguyen C."/>
            <person name="Du F."/>
            <person name="Lamar B."/>
            <person name="Courtney L."/>
            <person name="Kalicki J."/>
            <person name="Ozersky P."/>
            <person name="Bielicki L."/>
            <person name="Scott K."/>
            <person name="Holmes A."/>
            <person name="Harkins R."/>
            <person name="Harris A."/>
            <person name="Strong C.M."/>
            <person name="Hou S."/>
            <person name="Tomlinson C."/>
            <person name="Dauphin-Kohlberg S."/>
            <person name="Kozlowicz-Reilly A."/>
            <person name="Leonard S."/>
            <person name="Rohlfing T."/>
            <person name="Rock S.M."/>
            <person name="Tin-Wollam A.-M."/>
            <person name="Abbott A."/>
            <person name="Minx P."/>
            <person name="Maupin R."/>
            <person name="Strowmatt C."/>
            <person name="Latreille P."/>
            <person name="Miller N."/>
            <person name="Johnson D."/>
            <person name="Murray J."/>
            <person name="Woessner J.P."/>
            <person name="Wendl M.C."/>
            <person name="Yang S.-P."/>
            <person name="Schultz B.R."/>
            <person name="Wallis J.W."/>
            <person name="Spieth J."/>
            <person name="Bieri T.A."/>
            <person name="Nelson J.O."/>
            <person name="Berkowicz N."/>
            <person name="Wohldmann P.E."/>
            <person name="Cook L.L."/>
            <person name="Hickenbotham M.T."/>
            <person name="Eldred J."/>
            <person name="Williams D."/>
            <person name="Bedell J.A."/>
            <person name="Mardis E.R."/>
            <person name="Clifton S.W."/>
            <person name="Chissoe S.L."/>
            <person name="Marra M.A."/>
            <person name="Raymond C."/>
            <person name="Haugen E."/>
            <person name="Gillett W."/>
            <person name="Zhou Y."/>
            <person name="James R."/>
            <person name="Phelps K."/>
            <person name="Iadanoto S."/>
            <person name="Bubb K."/>
            <person name="Simms E."/>
            <person name="Levy R."/>
            <person name="Clendenning J."/>
            <person name="Kaul R."/>
            <person name="Kent W.J."/>
            <person name="Furey T.S."/>
            <person name="Baertsch R.A."/>
            <person name="Brent M.R."/>
            <person name="Keibler E."/>
            <person name="Flicek P."/>
            <person name="Bork P."/>
            <person name="Suyama M."/>
            <person name="Bailey J.A."/>
            <person name="Portnoy M.E."/>
            <person name="Torrents D."/>
            <person name="Chinwalla A.T."/>
            <person name="Gish W.R."/>
            <person name="Eddy S.R."/>
            <person name="McPherson J.D."/>
            <person name="Olson M.V."/>
            <person name="Eichler E.E."/>
            <person name="Green E.D."/>
            <person name="Waterston R.H."/>
            <person name="Wilson R.K."/>
        </authorList>
    </citation>
    <scope>NUCLEOTIDE SEQUENCE [LARGE SCALE GENOMIC DNA]</scope>
</reference>